<feature type="chain" id="PRO_0000264410" description="UDP-3-O-acylglucosamine N-acyltransferase">
    <location>
        <begin position="1"/>
        <end position="344"/>
    </location>
</feature>
<feature type="active site" description="Proton acceptor" evidence="1">
    <location>
        <position position="248"/>
    </location>
</feature>
<gene>
    <name evidence="1" type="primary">lpxD</name>
    <name type="ordered locus">PMM0787</name>
</gene>
<reference key="1">
    <citation type="journal article" date="2003" name="Nature">
        <title>Genome divergence in two Prochlorococcus ecotypes reflects oceanic niche differentiation.</title>
        <authorList>
            <person name="Rocap G."/>
            <person name="Larimer F.W."/>
            <person name="Lamerdin J.E."/>
            <person name="Malfatti S."/>
            <person name="Chain P."/>
            <person name="Ahlgren N.A."/>
            <person name="Arellano A."/>
            <person name="Coleman M."/>
            <person name="Hauser L."/>
            <person name="Hess W.R."/>
            <person name="Johnson Z.I."/>
            <person name="Land M.L."/>
            <person name="Lindell D."/>
            <person name="Post A.F."/>
            <person name="Regala W."/>
            <person name="Shah M."/>
            <person name="Shaw S.L."/>
            <person name="Steglich C."/>
            <person name="Sullivan M.B."/>
            <person name="Ting C.S."/>
            <person name="Tolonen A."/>
            <person name="Webb E.A."/>
            <person name="Zinser E.R."/>
            <person name="Chisholm S.W."/>
        </authorList>
    </citation>
    <scope>NUCLEOTIDE SEQUENCE [LARGE SCALE GENOMIC DNA]</scope>
    <source>
        <strain>CCMP1986 / NIES-2087 / MED4</strain>
    </source>
</reference>
<sequence>MLLSKLVDLIKSGESKFIKANIFENIDIENAASIDIALKNQISFLEENNILKDNLGKTSASAIITSNNNEILGLLESLNISNIVVENPRIAFAEVLNFLYEEINFNPGIDDSAVIKSSAKVGKNCYVGPNVYIGENSIIGDNNKIFPGTTILGNVRLGNNNVIHPNCVIYENTSIENNCVINSNTVIGSEGFGFIPQDGKWIKMPQKGCVIIKSFVEIGTNCCIDRPSVGNTFIDEGTKMDNLVQIGHGVKIGKNCAFAAQVGIAGGAVIGNSVILAGQVGVNNRVKVGNNVIASSKCGIHCDIEDGEVVSGFPAMKNKSWLRSSSVFKKLPELAKKLRQLDKK</sequence>
<evidence type="ECO:0000255" key="1">
    <source>
        <dbReference type="HAMAP-Rule" id="MF_00523"/>
    </source>
</evidence>
<proteinExistence type="inferred from homology"/>
<organism>
    <name type="scientific">Prochlorococcus marinus subsp. pastoris (strain CCMP1986 / NIES-2087 / MED4)</name>
    <dbReference type="NCBI Taxonomy" id="59919"/>
    <lineage>
        <taxon>Bacteria</taxon>
        <taxon>Bacillati</taxon>
        <taxon>Cyanobacteriota</taxon>
        <taxon>Cyanophyceae</taxon>
        <taxon>Synechococcales</taxon>
        <taxon>Prochlorococcaceae</taxon>
        <taxon>Prochlorococcus</taxon>
    </lineage>
</organism>
<keyword id="KW-0012">Acyltransferase</keyword>
<keyword id="KW-0441">Lipid A biosynthesis</keyword>
<keyword id="KW-0444">Lipid biosynthesis</keyword>
<keyword id="KW-0443">Lipid metabolism</keyword>
<keyword id="KW-0677">Repeat</keyword>
<keyword id="KW-0808">Transferase</keyword>
<comment type="function">
    <text evidence="1">Catalyzes the N-acylation of UDP-3-O-acylglucosamine using 3-hydroxyacyl-ACP as the acyl donor. Is involved in the biosynthesis of lipid A, a phosphorylated glycolipid that anchors the lipopolysaccharide to the outer membrane of the cell.</text>
</comment>
<comment type="catalytic activity">
    <reaction evidence="1">
        <text>a UDP-3-O-[(3R)-3-hydroxyacyl]-alpha-D-glucosamine + a (3R)-hydroxyacyl-[ACP] = a UDP-2-N,3-O-bis[(3R)-3-hydroxyacyl]-alpha-D-glucosamine + holo-[ACP] + H(+)</text>
        <dbReference type="Rhea" id="RHEA:53836"/>
        <dbReference type="Rhea" id="RHEA-COMP:9685"/>
        <dbReference type="Rhea" id="RHEA-COMP:9945"/>
        <dbReference type="ChEBI" id="CHEBI:15378"/>
        <dbReference type="ChEBI" id="CHEBI:64479"/>
        <dbReference type="ChEBI" id="CHEBI:78827"/>
        <dbReference type="ChEBI" id="CHEBI:137740"/>
        <dbReference type="ChEBI" id="CHEBI:137748"/>
        <dbReference type="EC" id="2.3.1.191"/>
    </reaction>
</comment>
<comment type="pathway">
    <text evidence="1">Bacterial outer membrane biogenesis; LPS lipid A biosynthesis.</text>
</comment>
<comment type="subunit">
    <text evidence="1">Homotrimer.</text>
</comment>
<comment type="similarity">
    <text evidence="1">Belongs to the transferase hexapeptide repeat family. LpxD subfamily.</text>
</comment>
<dbReference type="EC" id="2.3.1.191" evidence="1"/>
<dbReference type="EMBL" id="BX548174">
    <property type="protein sequence ID" value="CAE19246.1"/>
    <property type="molecule type" value="Genomic_DNA"/>
</dbReference>
<dbReference type="RefSeq" id="WP_011132421.1">
    <property type="nucleotide sequence ID" value="NC_005072.1"/>
</dbReference>
<dbReference type="SMR" id="Q7V1R8"/>
<dbReference type="STRING" id="59919.PMM0787"/>
<dbReference type="KEGG" id="pmm:PMM0787"/>
<dbReference type="eggNOG" id="COG1044">
    <property type="taxonomic scope" value="Bacteria"/>
</dbReference>
<dbReference type="HOGENOM" id="CLU_049865_0_0_3"/>
<dbReference type="OrthoDB" id="9784739at2"/>
<dbReference type="UniPathway" id="UPA00973"/>
<dbReference type="Proteomes" id="UP000001026">
    <property type="component" value="Chromosome"/>
</dbReference>
<dbReference type="GO" id="GO:0031470">
    <property type="term" value="C:carboxysome"/>
    <property type="evidence" value="ECO:0007669"/>
    <property type="project" value="UniProtKB-ARBA"/>
</dbReference>
<dbReference type="GO" id="GO:0016020">
    <property type="term" value="C:membrane"/>
    <property type="evidence" value="ECO:0007669"/>
    <property type="project" value="GOC"/>
</dbReference>
<dbReference type="GO" id="GO:0016410">
    <property type="term" value="F:N-acyltransferase activity"/>
    <property type="evidence" value="ECO:0007669"/>
    <property type="project" value="InterPro"/>
</dbReference>
<dbReference type="GO" id="GO:0043886">
    <property type="term" value="F:structural constituent of carboxysome shell"/>
    <property type="evidence" value="ECO:0007669"/>
    <property type="project" value="UniProtKB-ARBA"/>
</dbReference>
<dbReference type="GO" id="GO:0009245">
    <property type="term" value="P:lipid A biosynthetic process"/>
    <property type="evidence" value="ECO:0007669"/>
    <property type="project" value="UniProtKB-UniRule"/>
</dbReference>
<dbReference type="CDD" id="cd03352">
    <property type="entry name" value="LbH_LpxD"/>
    <property type="match status" value="1"/>
</dbReference>
<dbReference type="Gene3D" id="2.160.10.10">
    <property type="entry name" value="Hexapeptide repeat proteins"/>
    <property type="match status" value="1"/>
</dbReference>
<dbReference type="Gene3D" id="3.40.1390.10">
    <property type="entry name" value="MurE/MurF, N-terminal domain"/>
    <property type="match status" value="1"/>
</dbReference>
<dbReference type="HAMAP" id="MF_00523">
    <property type="entry name" value="LpxD"/>
    <property type="match status" value="1"/>
</dbReference>
<dbReference type="InterPro" id="IPR001451">
    <property type="entry name" value="Hexapep"/>
</dbReference>
<dbReference type="InterPro" id="IPR007691">
    <property type="entry name" value="LpxD"/>
</dbReference>
<dbReference type="InterPro" id="IPR011004">
    <property type="entry name" value="Trimer_LpxA-like_sf"/>
</dbReference>
<dbReference type="InterPro" id="IPR020573">
    <property type="entry name" value="UDP_GlcNAc_AcTrfase_non-rep"/>
</dbReference>
<dbReference type="NCBIfam" id="TIGR01853">
    <property type="entry name" value="lipid_A_lpxD"/>
    <property type="match status" value="1"/>
</dbReference>
<dbReference type="NCBIfam" id="NF002060">
    <property type="entry name" value="PRK00892.1"/>
    <property type="match status" value="1"/>
</dbReference>
<dbReference type="PANTHER" id="PTHR43378">
    <property type="entry name" value="UDP-3-O-ACYLGLUCOSAMINE N-ACYLTRANSFERASE"/>
    <property type="match status" value="1"/>
</dbReference>
<dbReference type="PANTHER" id="PTHR43378:SF2">
    <property type="entry name" value="UDP-3-O-ACYLGLUCOSAMINE N-ACYLTRANSFERASE 1, MITOCHONDRIAL-RELATED"/>
    <property type="match status" value="1"/>
</dbReference>
<dbReference type="Pfam" id="PF00132">
    <property type="entry name" value="Hexapep"/>
    <property type="match status" value="1"/>
</dbReference>
<dbReference type="Pfam" id="PF04613">
    <property type="entry name" value="LpxD"/>
    <property type="match status" value="1"/>
</dbReference>
<dbReference type="SUPFAM" id="SSF51161">
    <property type="entry name" value="Trimeric LpxA-like enzymes"/>
    <property type="match status" value="1"/>
</dbReference>
<name>LPXD_PROMP</name>
<protein>
    <recommendedName>
        <fullName evidence="1">UDP-3-O-acylglucosamine N-acyltransferase</fullName>
        <ecNumber evidence="1">2.3.1.191</ecNumber>
    </recommendedName>
</protein>
<accession>Q7V1R8</accession>